<dbReference type="EC" id="3.6.1.31" evidence="1"/>
<dbReference type="EMBL" id="AE016877">
    <property type="protein sequence ID" value="AAP08393.1"/>
    <property type="molecule type" value="Genomic_DNA"/>
</dbReference>
<dbReference type="RefSeq" id="NP_831192.1">
    <property type="nucleotide sequence ID" value="NC_004722.1"/>
</dbReference>
<dbReference type="RefSeq" id="WP_000426358.1">
    <property type="nucleotide sequence ID" value="NZ_CP138336.1"/>
</dbReference>
<dbReference type="PDB" id="1YVW">
    <property type="method" value="X-ray"/>
    <property type="resolution" value="2.60 A"/>
    <property type="chains" value="A/B/C/D=1-107"/>
</dbReference>
<dbReference type="PDBsum" id="1YVW"/>
<dbReference type="SMR" id="Q81G00"/>
<dbReference type="STRING" id="226900.BC_1412"/>
<dbReference type="KEGG" id="bce:BC1412"/>
<dbReference type="PATRIC" id="fig|226900.8.peg.1389"/>
<dbReference type="HOGENOM" id="CLU_123337_0_0_9"/>
<dbReference type="OrthoDB" id="9795769at2"/>
<dbReference type="UniPathway" id="UPA00031">
    <property type="reaction ID" value="UER00007"/>
</dbReference>
<dbReference type="EvolutionaryTrace" id="Q81G00"/>
<dbReference type="Proteomes" id="UP000001417">
    <property type="component" value="Chromosome"/>
</dbReference>
<dbReference type="GO" id="GO:0005737">
    <property type="term" value="C:cytoplasm"/>
    <property type="evidence" value="ECO:0007669"/>
    <property type="project" value="UniProtKB-SubCell"/>
</dbReference>
<dbReference type="GO" id="GO:0005524">
    <property type="term" value="F:ATP binding"/>
    <property type="evidence" value="ECO:0007669"/>
    <property type="project" value="UniProtKB-KW"/>
</dbReference>
<dbReference type="GO" id="GO:0004636">
    <property type="term" value="F:phosphoribosyl-ATP diphosphatase activity"/>
    <property type="evidence" value="ECO:0007669"/>
    <property type="project" value="UniProtKB-UniRule"/>
</dbReference>
<dbReference type="GO" id="GO:0000105">
    <property type="term" value="P:L-histidine biosynthetic process"/>
    <property type="evidence" value="ECO:0007669"/>
    <property type="project" value="UniProtKB-UniRule"/>
</dbReference>
<dbReference type="CDD" id="cd11534">
    <property type="entry name" value="NTP-PPase_HisIE_like"/>
    <property type="match status" value="1"/>
</dbReference>
<dbReference type="Gene3D" id="1.10.287.1080">
    <property type="entry name" value="MazG-like"/>
    <property type="match status" value="1"/>
</dbReference>
<dbReference type="HAMAP" id="MF_01020">
    <property type="entry name" value="HisE"/>
    <property type="match status" value="1"/>
</dbReference>
<dbReference type="InterPro" id="IPR008179">
    <property type="entry name" value="HisE"/>
</dbReference>
<dbReference type="InterPro" id="IPR021130">
    <property type="entry name" value="PRib-ATP_PPHydrolase-like"/>
</dbReference>
<dbReference type="NCBIfam" id="TIGR03188">
    <property type="entry name" value="histidine_hisI"/>
    <property type="match status" value="1"/>
</dbReference>
<dbReference type="NCBIfam" id="NF001611">
    <property type="entry name" value="PRK00400.1-3"/>
    <property type="match status" value="1"/>
</dbReference>
<dbReference type="PANTHER" id="PTHR42945">
    <property type="entry name" value="HISTIDINE BIOSYNTHESIS BIFUNCTIONAL PROTEIN"/>
    <property type="match status" value="1"/>
</dbReference>
<dbReference type="PANTHER" id="PTHR42945:SF9">
    <property type="entry name" value="HISTIDINE BIOSYNTHESIS BIFUNCTIONAL PROTEIN HISIE"/>
    <property type="match status" value="1"/>
</dbReference>
<dbReference type="Pfam" id="PF01503">
    <property type="entry name" value="PRA-PH"/>
    <property type="match status" value="1"/>
</dbReference>
<dbReference type="SUPFAM" id="SSF101386">
    <property type="entry name" value="all-alpha NTP pyrophosphatases"/>
    <property type="match status" value="1"/>
</dbReference>
<keyword id="KW-0002">3D-structure</keyword>
<keyword id="KW-0028">Amino-acid biosynthesis</keyword>
<keyword id="KW-0067">ATP-binding</keyword>
<keyword id="KW-0963">Cytoplasm</keyword>
<keyword id="KW-0368">Histidine biosynthesis</keyword>
<keyword id="KW-0378">Hydrolase</keyword>
<keyword id="KW-0547">Nucleotide-binding</keyword>
<keyword id="KW-1185">Reference proteome</keyword>
<gene>
    <name evidence="1" type="primary">hisE</name>
    <name type="ordered locus">BC_1412</name>
</gene>
<protein>
    <recommendedName>
        <fullName evidence="1">Phosphoribosyl-ATP pyrophosphatase</fullName>
        <shortName evidence="1">PRA-PH</shortName>
        <ecNumber evidence="1">3.6.1.31</ecNumber>
    </recommendedName>
</protein>
<evidence type="ECO:0000255" key="1">
    <source>
        <dbReference type="HAMAP-Rule" id="MF_01020"/>
    </source>
</evidence>
<evidence type="ECO:0007829" key="2">
    <source>
        <dbReference type="PDB" id="1YVW"/>
    </source>
</evidence>
<proteinExistence type="evidence at protein level"/>
<reference key="1">
    <citation type="journal article" date="2003" name="Nature">
        <title>Genome sequence of Bacillus cereus and comparative analysis with Bacillus anthracis.</title>
        <authorList>
            <person name="Ivanova N."/>
            <person name="Sorokin A."/>
            <person name="Anderson I."/>
            <person name="Galleron N."/>
            <person name="Candelon B."/>
            <person name="Kapatral V."/>
            <person name="Bhattacharyya A."/>
            <person name="Reznik G."/>
            <person name="Mikhailova N."/>
            <person name="Lapidus A."/>
            <person name="Chu L."/>
            <person name="Mazur M."/>
            <person name="Goltsman E."/>
            <person name="Larsen N."/>
            <person name="D'Souza M."/>
            <person name="Walunas T."/>
            <person name="Grechkin Y."/>
            <person name="Pusch G."/>
            <person name="Haselkorn R."/>
            <person name="Fonstein M."/>
            <person name="Ehrlich S.D."/>
            <person name="Overbeek R."/>
            <person name="Kyrpides N.C."/>
        </authorList>
    </citation>
    <scope>NUCLEOTIDE SEQUENCE [LARGE SCALE GENOMIC DNA]</scope>
    <source>
        <strain>ATCC 14579 / DSM 31 / CCUG 7414 / JCM 2152 / NBRC 15305 / NCIMB 9373 / NCTC 2599 / NRRL B-3711</strain>
    </source>
</reference>
<organism>
    <name type="scientific">Bacillus cereus (strain ATCC 14579 / DSM 31 / CCUG 7414 / JCM 2152 / NBRC 15305 / NCIMB 9373 / NCTC 2599 / NRRL B-3711)</name>
    <dbReference type="NCBI Taxonomy" id="226900"/>
    <lineage>
        <taxon>Bacteria</taxon>
        <taxon>Bacillati</taxon>
        <taxon>Bacillota</taxon>
        <taxon>Bacilli</taxon>
        <taxon>Bacillales</taxon>
        <taxon>Bacillaceae</taxon>
        <taxon>Bacillus</taxon>
        <taxon>Bacillus cereus group</taxon>
    </lineage>
</organism>
<comment type="catalytic activity">
    <reaction evidence="1">
        <text>1-(5-phospho-beta-D-ribosyl)-ATP + H2O = 1-(5-phospho-beta-D-ribosyl)-5'-AMP + diphosphate + H(+)</text>
        <dbReference type="Rhea" id="RHEA:22828"/>
        <dbReference type="ChEBI" id="CHEBI:15377"/>
        <dbReference type="ChEBI" id="CHEBI:15378"/>
        <dbReference type="ChEBI" id="CHEBI:33019"/>
        <dbReference type="ChEBI" id="CHEBI:59457"/>
        <dbReference type="ChEBI" id="CHEBI:73183"/>
        <dbReference type="EC" id="3.6.1.31"/>
    </reaction>
</comment>
<comment type="pathway">
    <text evidence="1">Amino-acid biosynthesis; L-histidine biosynthesis; L-histidine from 5-phospho-alpha-D-ribose 1-diphosphate: step 2/9.</text>
</comment>
<comment type="subcellular location">
    <subcellularLocation>
        <location evidence="1">Cytoplasm</location>
    </subcellularLocation>
</comment>
<comment type="similarity">
    <text evidence="1">Belongs to the PRA-PH family.</text>
</comment>
<name>HIS2_BACCR</name>
<accession>Q81G00</accession>
<feature type="chain" id="PRO_0000136345" description="Phosphoribosyl-ATP pyrophosphatase">
    <location>
        <begin position="1"/>
        <end position="107"/>
    </location>
</feature>
<feature type="helix" evidence="2">
    <location>
        <begin position="5"/>
        <end position="17"/>
    </location>
</feature>
<feature type="helix" evidence="2">
    <location>
        <begin position="24"/>
        <end position="31"/>
    </location>
</feature>
<feature type="helix" evidence="2">
    <location>
        <begin position="33"/>
        <end position="52"/>
    </location>
</feature>
<feature type="helix" evidence="2">
    <location>
        <begin position="56"/>
        <end position="76"/>
    </location>
</feature>
<feature type="helix" evidence="2">
    <location>
        <begin position="81"/>
        <end position="94"/>
    </location>
</feature>
<sequence>MENAFKLLYKTIEERKGSPLPESYTNYLFSKGEDKILKKIGEECAEVIIACKNNDKEEVVKEMVDVFYHCFVLLAEKNIALEDVMREVKERNGKLSRVGDRREIDTL</sequence>